<gene>
    <name evidence="1" type="primary">MMM1</name>
    <name type="ORF">CTRG_00085</name>
</gene>
<evidence type="ECO:0000255" key="1">
    <source>
        <dbReference type="HAMAP-Rule" id="MF_03103"/>
    </source>
</evidence>
<evidence type="ECO:0000256" key="2">
    <source>
        <dbReference type="SAM" id="MobiDB-lite"/>
    </source>
</evidence>
<proteinExistence type="inferred from homology"/>
<dbReference type="EMBL" id="GG692395">
    <property type="protein sequence ID" value="EER35346.1"/>
    <property type="molecule type" value="Genomic_DNA"/>
</dbReference>
<dbReference type="RefSeq" id="XP_002545304.1">
    <property type="nucleotide sequence ID" value="XM_002545258.1"/>
</dbReference>
<dbReference type="SMR" id="C5M1Z6"/>
<dbReference type="STRING" id="294747.C5M1Z6"/>
<dbReference type="EnsemblFungi" id="CTRG_00085-t43_1">
    <property type="protein sequence ID" value="CTRG_00085-t43_1-p1"/>
    <property type="gene ID" value="CTRG_00085"/>
</dbReference>
<dbReference type="GeneID" id="8296663"/>
<dbReference type="KEGG" id="ctp:CTRG_00085"/>
<dbReference type="VEuPathDB" id="FungiDB:CTRG_00085"/>
<dbReference type="eggNOG" id="ENOG502QUUW">
    <property type="taxonomic scope" value="Eukaryota"/>
</dbReference>
<dbReference type="HOGENOM" id="CLU_032730_2_0_1"/>
<dbReference type="OrthoDB" id="5599157at2759"/>
<dbReference type="Proteomes" id="UP000002037">
    <property type="component" value="Unassembled WGS sequence"/>
</dbReference>
<dbReference type="GO" id="GO:0005789">
    <property type="term" value="C:endoplasmic reticulum membrane"/>
    <property type="evidence" value="ECO:0007669"/>
    <property type="project" value="UniProtKB-SubCell"/>
</dbReference>
<dbReference type="GO" id="GO:0032865">
    <property type="term" value="C:ERMES complex"/>
    <property type="evidence" value="ECO:0007669"/>
    <property type="project" value="UniProtKB-UniRule"/>
</dbReference>
<dbReference type="GO" id="GO:0008289">
    <property type="term" value="F:lipid binding"/>
    <property type="evidence" value="ECO:0007669"/>
    <property type="project" value="UniProtKB-KW"/>
</dbReference>
<dbReference type="GO" id="GO:0000002">
    <property type="term" value="P:mitochondrial genome maintenance"/>
    <property type="evidence" value="ECO:0007669"/>
    <property type="project" value="UniProtKB-UniRule"/>
</dbReference>
<dbReference type="GO" id="GO:1990456">
    <property type="term" value="P:mitochondrion-endoplasmic reticulum membrane tethering"/>
    <property type="evidence" value="ECO:0007669"/>
    <property type="project" value="TreeGrafter"/>
</dbReference>
<dbReference type="GO" id="GO:0015914">
    <property type="term" value="P:phospholipid transport"/>
    <property type="evidence" value="ECO:0007669"/>
    <property type="project" value="TreeGrafter"/>
</dbReference>
<dbReference type="GO" id="GO:0045040">
    <property type="term" value="P:protein insertion into mitochondrial outer membrane"/>
    <property type="evidence" value="ECO:0007669"/>
    <property type="project" value="UniProtKB-UniRule"/>
</dbReference>
<dbReference type="CDD" id="cd21671">
    <property type="entry name" value="SMP_Mmm1"/>
    <property type="match status" value="1"/>
</dbReference>
<dbReference type="HAMAP" id="MF_03103">
    <property type="entry name" value="Mmm1"/>
    <property type="match status" value="1"/>
</dbReference>
<dbReference type="InterPro" id="IPR027537">
    <property type="entry name" value="Mmm1"/>
</dbReference>
<dbReference type="InterPro" id="IPR019411">
    <property type="entry name" value="MMM1_dom"/>
</dbReference>
<dbReference type="InterPro" id="IPR031468">
    <property type="entry name" value="SMP_LBD"/>
</dbReference>
<dbReference type="PANTHER" id="PTHR13466:SF0">
    <property type="entry name" value="SMP-LTD DOMAIN-CONTAINING PROTEIN"/>
    <property type="match status" value="1"/>
</dbReference>
<dbReference type="PANTHER" id="PTHR13466">
    <property type="entry name" value="TEX2 PROTEIN-RELATED"/>
    <property type="match status" value="1"/>
</dbReference>
<dbReference type="Pfam" id="PF10296">
    <property type="entry name" value="MMM1"/>
    <property type="match status" value="1"/>
</dbReference>
<dbReference type="SUPFAM" id="SSF81995">
    <property type="entry name" value="beta-sandwich domain of Sec23/24"/>
    <property type="match status" value="1"/>
</dbReference>
<dbReference type="PROSITE" id="PS51847">
    <property type="entry name" value="SMP"/>
    <property type="match status" value="1"/>
</dbReference>
<comment type="function">
    <text evidence="1">Component of the ERMES/MDM complex, which serves as a molecular tether to connect the endoplasmic reticulum (ER) and mitochondria. Components of this complex are involved in the control of mitochondrial shape and protein biogenesis, and function in nonvesicular lipid trafficking between the ER and mitochondria. The MDM12-MMM1 subcomplex functions in the major beta-barrel assembly pathway that is responsible for biogenesis of all outer membrane beta-barrel proteins, and acts in a late step after the SAM complex. The MDM10-MDM12-MMM1 subcomplex further acts in the TOM40-specific pathway after the action of the MDM12-MMM1 complex. Essential for establishing and maintaining the structure of mitochondria and maintenance of mtDNA nucleoids.</text>
</comment>
<comment type="subunit">
    <text evidence="1">Homodimer. Component of the ER-mitochondria encounter structure (ERMES) or MDM complex, composed of MMM1, MDM10, MDM12 and MDM34. A MMM1 homodimer associates with one molecule of MDM12 on each side in a pairwise head-to-tail manner, and the SMP-LTD domains of MMM1 and MDM12 generate a continuous hydrophobic tunnel for phospholipid trafficking.</text>
</comment>
<comment type="subcellular location">
    <subcellularLocation>
        <location evidence="1">Endoplasmic reticulum membrane</location>
        <topology evidence="1">Single-pass type I membrane protein</topology>
    </subcellularLocation>
    <text evidence="1">The ERMES/MDM complex localizes to a few discrete foci (around 10 per single cell), that represent mitochondria-endoplasmic reticulum junctions. These foci are often found next to mtDNA nucleoids.</text>
</comment>
<comment type="domain">
    <text evidence="1">The SMP-LTD domain is a barrel-like domain that can bind various types of glycerophospholipids in its interior and mediate their transfer between two adjacent bilayers.</text>
</comment>
<comment type="similarity">
    <text evidence="1">Belongs to the MMM1 family.</text>
</comment>
<sequence>MTKELIKTEASDHVIQPNNEQFSILEQLKKQQEELLQKQRELFLQDQLAHHQQQQQQQQQQLQFQQQNQLQPANNWTFTQGLVLGQISVIFIIIVFVKFFVFADSSTIPTKKSSIDASGIIVKRNKLTKKDGTSDDIIEDEKLLDTRHKISTILEKTYYDVNNHSPESLDWFNVLVAQTISQLRSEALLGDNIYHSLNDFLENTNIPEFIDKINLTEIDIGDDFPIFSNCRIKYGEDLGRLEAKIDVDLSDTLTLGISTKLLLNQPRPLTAILPVSLAVSIVRFSGCLTVSLINTKDIDLKNIEKDGQENDGSNNENEDGGGTALMFSFSPDYRLEFVVKSLIGSRAKLQDVPKISSLIESKLRTWFIERCVEPRFQVVRLPSLWPRTKNTREPINKKTSVSRSDSGTSENL</sequence>
<reference key="1">
    <citation type="journal article" date="2009" name="Nature">
        <title>Evolution of pathogenicity and sexual reproduction in eight Candida genomes.</title>
        <authorList>
            <person name="Butler G."/>
            <person name="Rasmussen M.D."/>
            <person name="Lin M.F."/>
            <person name="Santos M.A.S."/>
            <person name="Sakthikumar S."/>
            <person name="Munro C.A."/>
            <person name="Rheinbay E."/>
            <person name="Grabherr M."/>
            <person name="Forche A."/>
            <person name="Reedy J.L."/>
            <person name="Agrafioti I."/>
            <person name="Arnaud M.B."/>
            <person name="Bates S."/>
            <person name="Brown A.J.P."/>
            <person name="Brunke S."/>
            <person name="Costanzo M.C."/>
            <person name="Fitzpatrick D.A."/>
            <person name="de Groot P.W.J."/>
            <person name="Harris D."/>
            <person name="Hoyer L.L."/>
            <person name="Hube B."/>
            <person name="Klis F.M."/>
            <person name="Kodira C."/>
            <person name="Lennard N."/>
            <person name="Logue M.E."/>
            <person name="Martin R."/>
            <person name="Neiman A.M."/>
            <person name="Nikolaou E."/>
            <person name="Quail M.A."/>
            <person name="Quinn J."/>
            <person name="Santos M.C."/>
            <person name="Schmitzberger F.F."/>
            <person name="Sherlock G."/>
            <person name="Shah P."/>
            <person name="Silverstein K.A.T."/>
            <person name="Skrzypek M.S."/>
            <person name="Soll D."/>
            <person name="Staggs R."/>
            <person name="Stansfield I."/>
            <person name="Stumpf M.P.H."/>
            <person name="Sudbery P.E."/>
            <person name="Srikantha T."/>
            <person name="Zeng Q."/>
            <person name="Berman J."/>
            <person name="Berriman M."/>
            <person name="Heitman J."/>
            <person name="Gow N.A.R."/>
            <person name="Lorenz M.C."/>
            <person name="Birren B.W."/>
            <person name="Kellis M."/>
            <person name="Cuomo C.A."/>
        </authorList>
    </citation>
    <scope>NUCLEOTIDE SEQUENCE [LARGE SCALE GENOMIC DNA]</scope>
    <source>
        <strain>ATCC MYA-3404 / T1</strain>
    </source>
</reference>
<organism>
    <name type="scientific">Candida tropicalis (strain ATCC MYA-3404 / T1)</name>
    <name type="common">Yeast</name>
    <dbReference type="NCBI Taxonomy" id="294747"/>
    <lineage>
        <taxon>Eukaryota</taxon>
        <taxon>Fungi</taxon>
        <taxon>Dikarya</taxon>
        <taxon>Ascomycota</taxon>
        <taxon>Saccharomycotina</taxon>
        <taxon>Pichiomycetes</taxon>
        <taxon>Debaryomycetaceae</taxon>
        <taxon>Candida/Lodderomyces clade</taxon>
        <taxon>Candida</taxon>
    </lineage>
</organism>
<feature type="chain" id="PRO_0000384224" description="Maintenance of mitochondrial morphology protein 1">
    <location>
        <begin position="1"/>
        <end position="412"/>
    </location>
</feature>
<feature type="topological domain" description="Lumenal" evidence="1">
    <location>
        <begin position="1"/>
        <end position="81"/>
    </location>
</feature>
<feature type="transmembrane region" description="Helical" evidence="1">
    <location>
        <begin position="82"/>
        <end position="102"/>
    </location>
</feature>
<feature type="topological domain" description="Cytoplasmic" evidence="1">
    <location>
        <begin position="103"/>
        <end position="412"/>
    </location>
</feature>
<feature type="domain" description="SMP-LTD" evidence="1">
    <location>
        <begin position="165"/>
        <end position="382"/>
    </location>
</feature>
<feature type="region of interest" description="Disordered" evidence="2">
    <location>
        <begin position="389"/>
        <end position="412"/>
    </location>
</feature>
<feature type="compositionally biased region" description="Polar residues" evidence="2">
    <location>
        <begin position="397"/>
        <end position="412"/>
    </location>
</feature>
<name>MMM1_CANTT</name>
<keyword id="KW-0256">Endoplasmic reticulum</keyword>
<keyword id="KW-0445">Lipid transport</keyword>
<keyword id="KW-0446">Lipid-binding</keyword>
<keyword id="KW-0472">Membrane</keyword>
<keyword id="KW-1185">Reference proteome</keyword>
<keyword id="KW-0812">Transmembrane</keyword>
<keyword id="KW-1133">Transmembrane helix</keyword>
<keyword id="KW-0813">Transport</keyword>
<accession>C5M1Z6</accession>
<protein>
    <recommendedName>
        <fullName evidence="1">Maintenance of mitochondrial morphology protein 1</fullName>
    </recommendedName>
</protein>